<name>DUT_SALPK</name>
<gene>
    <name evidence="1" type="primary">dut</name>
    <name type="ordered locus">SSPA3346</name>
</gene>
<evidence type="ECO:0000255" key="1">
    <source>
        <dbReference type="HAMAP-Rule" id="MF_00116"/>
    </source>
</evidence>
<sequence>MKKIDVKILDPRVGQQFPLPTYATSGSAGLDLRACLDDAVELAPGATTLVPTGLAIHIADPSLAAVMLPRSGLGHKHGIVLGNLVGLIDSDYQGQLMVSIWNRGQDSFTIEPGERIAQMVFVPVVQAEFNLVEAFDATERGEGGFGHSGRK</sequence>
<proteinExistence type="inferred from homology"/>
<organism>
    <name type="scientific">Salmonella paratyphi A (strain AKU_12601)</name>
    <dbReference type="NCBI Taxonomy" id="554290"/>
    <lineage>
        <taxon>Bacteria</taxon>
        <taxon>Pseudomonadati</taxon>
        <taxon>Pseudomonadota</taxon>
        <taxon>Gammaproteobacteria</taxon>
        <taxon>Enterobacterales</taxon>
        <taxon>Enterobacteriaceae</taxon>
        <taxon>Salmonella</taxon>
    </lineage>
</organism>
<comment type="function">
    <text evidence="1">This enzyme is involved in nucleotide metabolism: it produces dUMP, the immediate precursor of thymidine nucleotides and it decreases the intracellular concentration of dUTP so that uracil cannot be incorporated into DNA.</text>
</comment>
<comment type="catalytic activity">
    <reaction evidence="1">
        <text>dUTP + H2O = dUMP + diphosphate + H(+)</text>
        <dbReference type="Rhea" id="RHEA:10248"/>
        <dbReference type="ChEBI" id="CHEBI:15377"/>
        <dbReference type="ChEBI" id="CHEBI:15378"/>
        <dbReference type="ChEBI" id="CHEBI:33019"/>
        <dbReference type="ChEBI" id="CHEBI:61555"/>
        <dbReference type="ChEBI" id="CHEBI:246422"/>
        <dbReference type="EC" id="3.6.1.23"/>
    </reaction>
</comment>
<comment type="cofactor">
    <cofactor evidence="1">
        <name>Mg(2+)</name>
        <dbReference type="ChEBI" id="CHEBI:18420"/>
    </cofactor>
</comment>
<comment type="pathway">
    <text evidence="1">Pyrimidine metabolism; dUMP biosynthesis; dUMP from dCTP (dUTP route): step 2/2.</text>
</comment>
<comment type="similarity">
    <text evidence="1">Belongs to the dUTPase family.</text>
</comment>
<feature type="chain" id="PRO_1000094992" description="Deoxyuridine 5'-triphosphate nucleotidohydrolase">
    <location>
        <begin position="1"/>
        <end position="151"/>
    </location>
</feature>
<feature type="binding site" evidence="1">
    <location>
        <begin position="70"/>
        <end position="72"/>
    </location>
    <ligand>
        <name>substrate</name>
    </ligand>
</feature>
<feature type="binding site" evidence="1">
    <location>
        <position position="83"/>
    </location>
    <ligand>
        <name>substrate</name>
    </ligand>
</feature>
<feature type="binding site" evidence="1">
    <location>
        <begin position="87"/>
        <end position="89"/>
    </location>
    <ligand>
        <name>substrate</name>
    </ligand>
</feature>
<feature type="binding site" evidence="1">
    <location>
        <position position="97"/>
    </location>
    <ligand>
        <name>substrate</name>
    </ligand>
</feature>
<protein>
    <recommendedName>
        <fullName evidence="1">Deoxyuridine 5'-triphosphate nucleotidohydrolase</fullName>
        <shortName evidence="1">dUTPase</shortName>
        <ecNumber evidence="1">3.6.1.23</ecNumber>
    </recommendedName>
    <alternativeName>
        <fullName evidence="1">dUTP pyrophosphatase</fullName>
    </alternativeName>
</protein>
<accession>B5BI14</accession>
<reference key="1">
    <citation type="journal article" date="2009" name="BMC Genomics">
        <title>Pseudogene accumulation in the evolutionary histories of Salmonella enterica serovars Paratyphi A and Typhi.</title>
        <authorList>
            <person name="Holt K.E."/>
            <person name="Thomson N.R."/>
            <person name="Wain J."/>
            <person name="Langridge G.C."/>
            <person name="Hasan R."/>
            <person name="Bhutta Z.A."/>
            <person name="Quail M.A."/>
            <person name="Norbertczak H."/>
            <person name="Walker D."/>
            <person name="Simmonds M."/>
            <person name="White B."/>
            <person name="Bason N."/>
            <person name="Mungall K."/>
            <person name="Dougan G."/>
            <person name="Parkhill J."/>
        </authorList>
    </citation>
    <scope>NUCLEOTIDE SEQUENCE [LARGE SCALE GENOMIC DNA]</scope>
    <source>
        <strain>AKU_12601</strain>
    </source>
</reference>
<dbReference type="EC" id="3.6.1.23" evidence="1"/>
<dbReference type="EMBL" id="FM200053">
    <property type="protein sequence ID" value="CAR61612.1"/>
    <property type="molecule type" value="Genomic_DNA"/>
</dbReference>
<dbReference type="SMR" id="B5BI14"/>
<dbReference type="KEGG" id="sek:SSPA3346"/>
<dbReference type="HOGENOM" id="CLU_068508_1_1_6"/>
<dbReference type="UniPathway" id="UPA00610">
    <property type="reaction ID" value="UER00666"/>
</dbReference>
<dbReference type="Proteomes" id="UP000001869">
    <property type="component" value="Chromosome"/>
</dbReference>
<dbReference type="GO" id="GO:0004170">
    <property type="term" value="F:dUTP diphosphatase activity"/>
    <property type="evidence" value="ECO:0007669"/>
    <property type="project" value="UniProtKB-UniRule"/>
</dbReference>
<dbReference type="GO" id="GO:0000287">
    <property type="term" value="F:magnesium ion binding"/>
    <property type="evidence" value="ECO:0007669"/>
    <property type="project" value="UniProtKB-UniRule"/>
</dbReference>
<dbReference type="GO" id="GO:0006226">
    <property type="term" value="P:dUMP biosynthetic process"/>
    <property type="evidence" value="ECO:0007669"/>
    <property type="project" value="UniProtKB-UniRule"/>
</dbReference>
<dbReference type="GO" id="GO:0046081">
    <property type="term" value="P:dUTP catabolic process"/>
    <property type="evidence" value="ECO:0007669"/>
    <property type="project" value="InterPro"/>
</dbReference>
<dbReference type="CDD" id="cd07557">
    <property type="entry name" value="trimeric_dUTPase"/>
    <property type="match status" value="1"/>
</dbReference>
<dbReference type="FunFam" id="2.70.40.10:FF:000002">
    <property type="entry name" value="dUTP diphosphatase"/>
    <property type="match status" value="1"/>
</dbReference>
<dbReference type="Gene3D" id="2.70.40.10">
    <property type="match status" value="1"/>
</dbReference>
<dbReference type="HAMAP" id="MF_00116">
    <property type="entry name" value="dUTPase_bact"/>
    <property type="match status" value="1"/>
</dbReference>
<dbReference type="InterPro" id="IPR008181">
    <property type="entry name" value="dUTPase"/>
</dbReference>
<dbReference type="InterPro" id="IPR029054">
    <property type="entry name" value="dUTPase-like"/>
</dbReference>
<dbReference type="InterPro" id="IPR036157">
    <property type="entry name" value="dUTPase-like_sf"/>
</dbReference>
<dbReference type="InterPro" id="IPR033704">
    <property type="entry name" value="dUTPase_trimeric"/>
</dbReference>
<dbReference type="NCBIfam" id="TIGR00576">
    <property type="entry name" value="dut"/>
    <property type="match status" value="1"/>
</dbReference>
<dbReference type="NCBIfam" id="NF001862">
    <property type="entry name" value="PRK00601.1"/>
    <property type="match status" value="1"/>
</dbReference>
<dbReference type="PANTHER" id="PTHR11241">
    <property type="entry name" value="DEOXYURIDINE 5'-TRIPHOSPHATE NUCLEOTIDOHYDROLASE"/>
    <property type="match status" value="1"/>
</dbReference>
<dbReference type="PANTHER" id="PTHR11241:SF0">
    <property type="entry name" value="DEOXYURIDINE 5'-TRIPHOSPHATE NUCLEOTIDOHYDROLASE"/>
    <property type="match status" value="1"/>
</dbReference>
<dbReference type="Pfam" id="PF00692">
    <property type="entry name" value="dUTPase"/>
    <property type="match status" value="1"/>
</dbReference>
<dbReference type="SUPFAM" id="SSF51283">
    <property type="entry name" value="dUTPase-like"/>
    <property type="match status" value="1"/>
</dbReference>
<keyword id="KW-0378">Hydrolase</keyword>
<keyword id="KW-0460">Magnesium</keyword>
<keyword id="KW-0479">Metal-binding</keyword>
<keyword id="KW-0546">Nucleotide metabolism</keyword>